<keyword id="KW-0067">ATP-binding</keyword>
<keyword id="KW-0963">Cytoplasm</keyword>
<keyword id="KW-0227">DNA damage</keyword>
<keyword id="KW-0233">DNA recombination</keyword>
<keyword id="KW-0234">DNA repair</keyword>
<keyword id="KW-0238">DNA-binding</keyword>
<keyword id="KW-0378">Hydrolase</keyword>
<keyword id="KW-0547">Nucleotide-binding</keyword>
<organism>
    <name type="scientific">Shewanella sp. (strain ANA-3)</name>
    <dbReference type="NCBI Taxonomy" id="94122"/>
    <lineage>
        <taxon>Bacteria</taxon>
        <taxon>Pseudomonadati</taxon>
        <taxon>Pseudomonadota</taxon>
        <taxon>Gammaproteobacteria</taxon>
        <taxon>Alteromonadales</taxon>
        <taxon>Shewanellaceae</taxon>
        <taxon>Shewanella</taxon>
    </lineage>
</organism>
<feature type="chain" id="PRO_1000001476" description="Holliday junction branch migration complex subunit RuvB">
    <location>
        <begin position="1"/>
        <end position="334"/>
    </location>
</feature>
<feature type="region of interest" description="Large ATPase domain (RuvB-L)" evidence="1">
    <location>
        <begin position="4"/>
        <end position="184"/>
    </location>
</feature>
<feature type="region of interest" description="Small ATPAse domain (RuvB-S)" evidence="1">
    <location>
        <begin position="185"/>
        <end position="255"/>
    </location>
</feature>
<feature type="region of interest" description="Head domain (RuvB-H)" evidence="1">
    <location>
        <begin position="258"/>
        <end position="334"/>
    </location>
</feature>
<feature type="binding site" evidence="1">
    <location>
        <position position="24"/>
    </location>
    <ligand>
        <name>ATP</name>
        <dbReference type="ChEBI" id="CHEBI:30616"/>
    </ligand>
</feature>
<feature type="binding site" evidence="1">
    <location>
        <position position="65"/>
    </location>
    <ligand>
        <name>ATP</name>
        <dbReference type="ChEBI" id="CHEBI:30616"/>
    </ligand>
</feature>
<feature type="binding site" evidence="1">
    <location>
        <position position="68"/>
    </location>
    <ligand>
        <name>ATP</name>
        <dbReference type="ChEBI" id="CHEBI:30616"/>
    </ligand>
</feature>
<feature type="binding site" evidence="1">
    <location>
        <position position="69"/>
    </location>
    <ligand>
        <name>ATP</name>
        <dbReference type="ChEBI" id="CHEBI:30616"/>
    </ligand>
</feature>
<feature type="binding site" evidence="1">
    <location>
        <position position="69"/>
    </location>
    <ligand>
        <name>Mg(2+)</name>
        <dbReference type="ChEBI" id="CHEBI:18420"/>
    </ligand>
</feature>
<feature type="binding site" evidence="1">
    <location>
        <position position="70"/>
    </location>
    <ligand>
        <name>ATP</name>
        <dbReference type="ChEBI" id="CHEBI:30616"/>
    </ligand>
</feature>
<feature type="binding site" evidence="1">
    <location>
        <begin position="131"/>
        <end position="133"/>
    </location>
    <ligand>
        <name>ATP</name>
        <dbReference type="ChEBI" id="CHEBI:30616"/>
    </ligand>
</feature>
<feature type="binding site" evidence="1">
    <location>
        <position position="174"/>
    </location>
    <ligand>
        <name>ATP</name>
        <dbReference type="ChEBI" id="CHEBI:30616"/>
    </ligand>
</feature>
<feature type="binding site" evidence="1">
    <location>
        <position position="184"/>
    </location>
    <ligand>
        <name>ATP</name>
        <dbReference type="ChEBI" id="CHEBI:30616"/>
    </ligand>
</feature>
<feature type="binding site" evidence="1">
    <location>
        <position position="221"/>
    </location>
    <ligand>
        <name>ATP</name>
        <dbReference type="ChEBI" id="CHEBI:30616"/>
    </ligand>
</feature>
<feature type="binding site" evidence="1">
    <location>
        <position position="294"/>
    </location>
    <ligand>
        <name>DNA</name>
        <dbReference type="ChEBI" id="CHEBI:16991"/>
    </ligand>
</feature>
<feature type="binding site" evidence="1">
    <location>
        <position position="313"/>
    </location>
    <ligand>
        <name>DNA</name>
        <dbReference type="ChEBI" id="CHEBI:16991"/>
    </ligand>
</feature>
<feature type="binding site" evidence="1">
    <location>
        <position position="318"/>
    </location>
    <ligand>
        <name>DNA</name>
        <dbReference type="ChEBI" id="CHEBI:16991"/>
    </ligand>
</feature>
<protein>
    <recommendedName>
        <fullName evidence="1">Holliday junction branch migration complex subunit RuvB</fullName>
        <ecNumber evidence="1">3.6.4.-</ecNumber>
    </recommendedName>
</protein>
<reference key="1">
    <citation type="submission" date="2006-09" db="EMBL/GenBank/DDBJ databases">
        <title>Complete sequence of chromosome 1 of Shewanella sp. ANA-3.</title>
        <authorList>
            <person name="Copeland A."/>
            <person name="Lucas S."/>
            <person name="Lapidus A."/>
            <person name="Barry K."/>
            <person name="Detter J.C."/>
            <person name="Glavina del Rio T."/>
            <person name="Hammon N."/>
            <person name="Israni S."/>
            <person name="Dalin E."/>
            <person name="Tice H."/>
            <person name="Pitluck S."/>
            <person name="Chertkov O."/>
            <person name="Brettin T."/>
            <person name="Bruce D."/>
            <person name="Han C."/>
            <person name="Tapia R."/>
            <person name="Gilna P."/>
            <person name="Schmutz J."/>
            <person name="Larimer F."/>
            <person name="Land M."/>
            <person name="Hauser L."/>
            <person name="Kyrpides N."/>
            <person name="Kim E."/>
            <person name="Newman D."/>
            <person name="Salticov C."/>
            <person name="Konstantinidis K."/>
            <person name="Klappenback J."/>
            <person name="Tiedje J."/>
            <person name="Richardson P."/>
        </authorList>
    </citation>
    <scope>NUCLEOTIDE SEQUENCE [LARGE SCALE GENOMIC DNA]</scope>
    <source>
        <strain>ANA-3</strain>
    </source>
</reference>
<dbReference type="EC" id="3.6.4.-" evidence="1"/>
<dbReference type="EMBL" id="CP000469">
    <property type="protein sequence ID" value="ABK48188.1"/>
    <property type="molecule type" value="Genomic_DNA"/>
</dbReference>
<dbReference type="RefSeq" id="WP_011716952.1">
    <property type="nucleotide sequence ID" value="NC_008577.1"/>
</dbReference>
<dbReference type="SMR" id="A0KWL9"/>
<dbReference type="STRING" id="94122.Shewana3_1957"/>
<dbReference type="KEGG" id="shn:Shewana3_1957"/>
<dbReference type="eggNOG" id="COG2255">
    <property type="taxonomic scope" value="Bacteria"/>
</dbReference>
<dbReference type="HOGENOM" id="CLU_055599_1_0_6"/>
<dbReference type="OrthoDB" id="9804478at2"/>
<dbReference type="Proteomes" id="UP000002589">
    <property type="component" value="Chromosome"/>
</dbReference>
<dbReference type="GO" id="GO:0005737">
    <property type="term" value="C:cytoplasm"/>
    <property type="evidence" value="ECO:0007669"/>
    <property type="project" value="UniProtKB-SubCell"/>
</dbReference>
<dbReference type="GO" id="GO:0048476">
    <property type="term" value="C:Holliday junction resolvase complex"/>
    <property type="evidence" value="ECO:0007669"/>
    <property type="project" value="UniProtKB-UniRule"/>
</dbReference>
<dbReference type="GO" id="GO:0005524">
    <property type="term" value="F:ATP binding"/>
    <property type="evidence" value="ECO:0007669"/>
    <property type="project" value="UniProtKB-UniRule"/>
</dbReference>
<dbReference type="GO" id="GO:0016887">
    <property type="term" value="F:ATP hydrolysis activity"/>
    <property type="evidence" value="ECO:0007669"/>
    <property type="project" value="InterPro"/>
</dbReference>
<dbReference type="GO" id="GO:0000400">
    <property type="term" value="F:four-way junction DNA binding"/>
    <property type="evidence" value="ECO:0007669"/>
    <property type="project" value="UniProtKB-UniRule"/>
</dbReference>
<dbReference type="GO" id="GO:0009378">
    <property type="term" value="F:four-way junction helicase activity"/>
    <property type="evidence" value="ECO:0007669"/>
    <property type="project" value="InterPro"/>
</dbReference>
<dbReference type="GO" id="GO:0006310">
    <property type="term" value="P:DNA recombination"/>
    <property type="evidence" value="ECO:0007669"/>
    <property type="project" value="UniProtKB-UniRule"/>
</dbReference>
<dbReference type="GO" id="GO:0006281">
    <property type="term" value="P:DNA repair"/>
    <property type="evidence" value="ECO:0007669"/>
    <property type="project" value="UniProtKB-UniRule"/>
</dbReference>
<dbReference type="CDD" id="cd00009">
    <property type="entry name" value="AAA"/>
    <property type="match status" value="1"/>
</dbReference>
<dbReference type="FunFam" id="1.10.10.10:FF:000086">
    <property type="entry name" value="Holliday junction ATP-dependent DNA helicase RuvB"/>
    <property type="match status" value="1"/>
</dbReference>
<dbReference type="FunFam" id="1.10.8.60:FF:000023">
    <property type="entry name" value="Holliday junction ATP-dependent DNA helicase RuvB"/>
    <property type="match status" value="1"/>
</dbReference>
<dbReference type="FunFam" id="3.40.50.300:FF:000073">
    <property type="entry name" value="Holliday junction ATP-dependent DNA helicase RuvB"/>
    <property type="match status" value="1"/>
</dbReference>
<dbReference type="Gene3D" id="1.10.8.60">
    <property type="match status" value="1"/>
</dbReference>
<dbReference type="Gene3D" id="3.40.50.300">
    <property type="entry name" value="P-loop containing nucleotide triphosphate hydrolases"/>
    <property type="match status" value="1"/>
</dbReference>
<dbReference type="Gene3D" id="1.10.10.10">
    <property type="entry name" value="Winged helix-like DNA-binding domain superfamily/Winged helix DNA-binding domain"/>
    <property type="match status" value="1"/>
</dbReference>
<dbReference type="HAMAP" id="MF_00016">
    <property type="entry name" value="DNA_HJ_migration_RuvB"/>
    <property type="match status" value="1"/>
</dbReference>
<dbReference type="InterPro" id="IPR003593">
    <property type="entry name" value="AAA+_ATPase"/>
</dbReference>
<dbReference type="InterPro" id="IPR041445">
    <property type="entry name" value="AAA_lid_4"/>
</dbReference>
<dbReference type="InterPro" id="IPR004605">
    <property type="entry name" value="DNA_helicase_Holl-junc_RuvB"/>
</dbReference>
<dbReference type="InterPro" id="IPR027417">
    <property type="entry name" value="P-loop_NTPase"/>
</dbReference>
<dbReference type="InterPro" id="IPR008824">
    <property type="entry name" value="RuvB-like_N"/>
</dbReference>
<dbReference type="InterPro" id="IPR008823">
    <property type="entry name" value="RuvB_C"/>
</dbReference>
<dbReference type="InterPro" id="IPR036388">
    <property type="entry name" value="WH-like_DNA-bd_sf"/>
</dbReference>
<dbReference type="InterPro" id="IPR036390">
    <property type="entry name" value="WH_DNA-bd_sf"/>
</dbReference>
<dbReference type="NCBIfam" id="NF000868">
    <property type="entry name" value="PRK00080.1"/>
    <property type="match status" value="1"/>
</dbReference>
<dbReference type="NCBIfam" id="TIGR00635">
    <property type="entry name" value="ruvB"/>
    <property type="match status" value="1"/>
</dbReference>
<dbReference type="PANTHER" id="PTHR42848">
    <property type="match status" value="1"/>
</dbReference>
<dbReference type="PANTHER" id="PTHR42848:SF1">
    <property type="entry name" value="HOLLIDAY JUNCTION BRANCH MIGRATION COMPLEX SUBUNIT RUVB"/>
    <property type="match status" value="1"/>
</dbReference>
<dbReference type="Pfam" id="PF17864">
    <property type="entry name" value="AAA_lid_4"/>
    <property type="match status" value="1"/>
</dbReference>
<dbReference type="Pfam" id="PF05491">
    <property type="entry name" value="RuvB_C"/>
    <property type="match status" value="1"/>
</dbReference>
<dbReference type="Pfam" id="PF05496">
    <property type="entry name" value="RuvB_N"/>
    <property type="match status" value="1"/>
</dbReference>
<dbReference type="SMART" id="SM00382">
    <property type="entry name" value="AAA"/>
    <property type="match status" value="1"/>
</dbReference>
<dbReference type="SUPFAM" id="SSF52540">
    <property type="entry name" value="P-loop containing nucleoside triphosphate hydrolases"/>
    <property type="match status" value="1"/>
</dbReference>
<dbReference type="SUPFAM" id="SSF46785">
    <property type="entry name" value="Winged helix' DNA-binding domain"/>
    <property type="match status" value="1"/>
</dbReference>
<accession>A0KWL9</accession>
<gene>
    <name evidence="1" type="primary">ruvB</name>
    <name type="ordered locus">Shewana3_1957</name>
</gene>
<evidence type="ECO:0000255" key="1">
    <source>
        <dbReference type="HAMAP-Rule" id="MF_00016"/>
    </source>
</evidence>
<comment type="function">
    <text evidence="1">The RuvA-RuvB-RuvC complex processes Holliday junction (HJ) DNA during genetic recombination and DNA repair, while the RuvA-RuvB complex plays an important role in the rescue of blocked DNA replication forks via replication fork reversal (RFR). RuvA specifically binds to HJ cruciform DNA, conferring on it an open structure. The RuvB hexamer acts as an ATP-dependent pump, pulling dsDNA into and through the RuvAB complex. RuvB forms 2 homohexamers on either side of HJ DNA bound by 1 or 2 RuvA tetramers; 4 subunits per hexamer contact DNA at a time. Coordinated motions by a converter formed by DNA-disengaged RuvB subunits stimulates ATP hydrolysis and nucleotide exchange. Immobilization of the converter enables RuvB to convert the ATP-contained energy into a lever motion, pulling 2 nucleotides of DNA out of the RuvA tetramer per ATP hydrolyzed, thus driving DNA branch migration. The RuvB motors rotate together with the DNA substrate, which together with the progressing nucleotide cycle form the mechanistic basis for DNA recombination by continuous HJ branch migration. Branch migration allows RuvC to scan DNA until it finds its consensus sequence, where it cleaves and resolves cruciform DNA.</text>
</comment>
<comment type="catalytic activity">
    <reaction evidence="1">
        <text>ATP + H2O = ADP + phosphate + H(+)</text>
        <dbReference type="Rhea" id="RHEA:13065"/>
        <dbReference type="ChEBI" id="CHEBI:15377"/>
        <dbReference type="ChEBI" id="CHEBI:15378"/>
        <dbReference type="ChEBI" id="CHEBI:30616"/>
        <dbReference type="ChEBI" id="CHEBI:43474"/>
        <dbReference type="ChEBI" id="CHEBI:456216"/>
    </reaction>
</comment>
<comment type="subunit">
    <text evidence="1">Homohexamer. Forms an RuvA(8)-RuvB(12)-Holliday junction (HJ) complex. HJ DNA is sandwiched between 2 RuvA tetramers; dsDNA enters through RuvA and exits via RuvB. An RuvB hexamer assembles on each DNA strand where it exits the tetramer. Each RuvB hexamer is contacted by two RuvA subunits (via domain III) on 2 adjacent RuvB subunits; this complex drives branch migration. In the full resolvosome a probable DNA-RuvA(4)-RuvB(12)-RuvC(2) complex forms which resolves the HJ.</text>
</comment>
<comment type="subcellular location">
    <subcellularLocation>
        <location evidence="1">Cytoplasm</location>
    </subcellularLocation>
</comment>
<comment type="domain">
    <text evidence="1">Has 3 domains, the large (RuvB-L) and small ATPase (RuvB-S) domains and the C-terminal head (RuvB-H) domain. The head domain binds DNA, while the ATPase domains jointly bind ATP, ADP or are empty depending on the state of the subunit in the translocation cycle. During a single DNA translocation step the structure of each domain remains the same, but their relative positions change.</text>
</comment>
<comment type="similarity">
    <text evidence="1">Belongs to the RuvB family.</text>
</comment>
<proteinExistence type="inferred from homology"/>
<name>RUVB_SHESA</name>
<sequence length="334" mass="36834">MIEADRLIQPQLQGQDDVIDRAMRPKLLDEYTGQDDTRAQLKVFIQAAKNREEALDHMLIYGPPGLGKTTLAMIVANEMGVNIKSTSGPVLEKAGDLAALLTNLEAGDVLFIDEIHRLSPVVEEILYPAMEDYQLDIMIGEGPAARSIKLDLPPFTLVGATTRAGALTSPLRARFGIPLRLEFYNVKDLSTIVTRSAQVMGLAIDSEGATEIAKRSRGTPRIANRLLRRVRDYAEVKHDGAVTQKVAEQALDLLDVDGEGFDYMDRKLLLAIIDKFMGGPVGLDNLAAAIGEERETIEDVLEPFLIQQGFIQRTPRGRIATTRAYLHFGMIKPE</sequence>